<sequence length="353" mass="40070">MANDQKNSESFPAKEDHKKDDAAAPAEVDHKDEFSASQPHPVENIVLVGRTGNGKSATGNSIVRSKVFKSKTKSSGVTMECHAVKAVTPEGPILNVIDTPGLFDLSVSAEFIGKEIVKCLTLADGGLHAVLLVLSVRTRISQEEEMVLSTLQVLFGSKIVDYLIVVFTGGDVLEDDGMTLEDYLGDNMPDFLKRVLILCGQRMILFDNKTKDDEKKTKQVHELLKLIDLVRKQNNNIPYTDEMYHMIKEENERHKKEQEELESKGHSEEQLAALMKELQIMNERNLKAMAEMMEKNMKIAMEAQEKLFEQREKAQEMSYQQKMEMQEKLKQMEGRMRAEMEAQMLSRQQCSIL</sequence>
<comment type="tissue specificity">
    <text evidence="9">Mainly expressed in leaves.</text>
</comment>
<comment type="developmental stage">
    <text evidence="9">Expressed at the flowering stage.</text>
</comment>
<comment type="induction">
    <text evidence="5 9">Up-regulated early after infection with P.syringae carrying avrRpt2 (PubMed:8742710). Up-regulated by brassinolide, cold treatment, syringolin, P.infestans infection and, at a lower level, by salicylic acid (PubMed:17723251). Down-regulated by 2-aminoethoxyvinylglycine (AVG), high CO(2), isoxaben, and propiconazole treatments (PubMed:17723251).</text>
</comment>
<comment type="similarity">
    <text evidence="8">Belongs to the TRAFAC class TrmE-Era-EngA-EngB-Septin-like GTPase superfamily. AIG1/Toc34/Toc159-like paraseptin GTPase family. IAN subfamily.</text>
</comment>
<reference key="1">
    <citation type="journal article" date="1996" name="Plant Cell">
        <title>Isolation of Arabidopsis genes that differentiate between resistance responses mediated by the RPS2 and RPM1 disease resistance genes.</title>
        <authorList>
            <person name="Reuber T.L."/>
            <person name="Ausubel F.M."/>
        </authorList>
    </citation>
    <scope>NUCLEOTIDE SEQUENCE [MRNA]</scope>
    <scope>INDUCTION</scope>
    <source>
        <strain>cv. Columbia</strain>
    </source>
</reference>
<reference key="2">
    <citation type="journal article" date="2000" name="Nature">
        <title>Sequence and analysis of chromosome 1 of the plant Arabidopsis thaliana.</title>
        <authorList>
            <person name="Theologis A."/>
            <person name="Ecker J.R."/>
            <person name="Palm C.J."/>
            <person name="Federspiel N.A."/>
            <person name="Kaul S."/>
            <person name="White O."/>
            <person name="Alonso J."/>
            <person name="Altafi H."/>
            <person name="Araujo R."/>
            <person name="Bowman C.L."/>
            <person name="Brooks S.Y."/>
            <person name="Buehler E."/>
            <person name="Chan A."/>
            <person name="Chao Q."/>
            <person name="Chen H."/>
            <person name="Cheuk R.F."/>
            <person name="Chin C.W."/>
            <person name="Chung M.K."/>
            <person name="Conn L."/>
            <person name="Conway A.B."/>
            <person name="Conway A.R."/>
            <person name="Creasy T.H."/>
            <person name="Dewar K."/>
            <person name="Dunn P."/>
            <person name="Etgu P."/>
            <person name="Feldblyum T.V."/>
            <person name="Feng J.-D."/>
            <person name="Fong B."/>
            <person name="Fujii C.Y."/>
            <person name="Gill J.E."/>
            <person name="Goldsmith A.D."/>
            <person name="Haas B."/>
            <person name="Hansen N.F."/>
            <person name="Hughes B."/>
            <person name="Huizar L."/>
            <person name="Hunter J.L."/>
            <person name="Jenkins J."/>
            <person name="Johnson-Hopson C."/>
            <person name="Khan S."/>
            <person name="Khaykin E."/>
            <person name="Kim C.J."/>
            <person name="Koo H.L."/>
            <person name="Kremenetskaia I."/>
            <person name="Kurtz D.B."/>
            <person name="Kwan A."/>
            <person name="Lam B."/>
            <person name="Langin-Hooper S."/>
            <person name="Lee A."/>
            <person name="Lee J.M."/>
            <person name="Lenz C.A."/>
            <person name="Li J.H."/>
            <person name="Li Y.-P."/>
            <person name="Lin X."/>
            <person name="Liu S.X."/>
            <person name="Liu Z.A."/>
            <person name="Luros J.S."/>
            <person name="Maiti R."/>
            <person name="Marziali A."/>
            <person name="Militscher J."/>
            <person name="Miranda M."/>
            <person name="Nguyen M."/>
            <person name="Nierman W.C."/>
            <person name="Osborne B.I."/>
            <person name="Pai G."/>
            <person name="Peterson J."/>
            <person name="Pham P.K."/>
            <person name="Rizzo M."/>
            <person name="Rooney T."/>
            <person name="Rowley D."/>
            <person name="Sakano H."/>
            <person name="Salzberg S.L."/>
            <person name="Schwartz J.R."/>
            <person name="Shinn P."/>
            <person name="Southwick A.M."/>
            <person name="Sun H."/>
            <person name="Tallon L.J."/>
            <person name="Tambunga G."/>
            <person name="Toriumi M.J."/>
            <person name="Town C.D."/>
            <person name="Utterback T."/>
            <person name="Van Aken S."/>
            <person name="Vaysberg M."/>
            <person name="Vysotskaia V.S."/>
            <person name="Walker M."/>
            <person name="Wu D."/>
            <person name="Yu G."/>
            <person name="Fraser C.M."/>
            <person name="Venter J.C."/>
            <person name="Davis R.W."/>
        </authorList>
    </citation>
    <scope>NUCLEOTIDE SEQUENCE [LARGE SCALE GENOMIC DNA]</scope>
    <source>
        <strain>cv. Columbia</strain>
    </source>
</reference>
<reference key="3">
    <citation type="journal article" date="2017" name="Plant J.">
        <title>Araport11: a complete reannotation of the Arabidopsis thaliana reference genome.</title>
        <authorList>
            <person name="Cheng C.Y."/>
            <person name="Krishnakumar V."/>
            <person name="Chan A.P."/>
            <person name="Thibaud-Nissen F."/>
            <person name="Schobel S."/>
            <person name="Town C.D."/>
        </authorList>
    </citation>
    <scope>GENOME REANNOTATION</scope>
    <source>
        <strain>cv. Columbia</strain>
    </source>
</reference>
<reference key="4">
    <citation type="journal article" date="2008" name="J. Plant Physiol.">
        <title>Computational identification and analysis of immune-associated nucleotide gene family in Arabidopsis thaliana.</title>
        <authorList>
            <person name="Liu C."/>
            <person name="Wang T."/>
            <person name="Zhang W."/>
            <person name="Li X."/>
        </authorList>
    </citation>
    <scope>GENE FAMILY</scope>
    <scope>NOMENCLATURE</scope>
</reference>
<evidence type="ECO:0000250" key="1">
    <source>
        <dbReference type="UniProtKB" id="Q8NHV1"/>
    </source>
</evidence>
<evidence type="ECO:0000255" key="2"/>
<evidence type="ECO:0000255" key="3">
    <source>
        <dbReference type="PROSITE-ProRule" id="PRU01057"/>
    </source>
</evidence>
<evidence type="ECO:0000256" key="4">
    <source>
        <dbReference type="SAM" id="MobiDB-lite"/>
    </source>
</evidence>
<evidence type="ECO:0000269" key="5">
    <source>
    </source>
</evidence>
<evidence type="ECO:0000303" key="6">
    <source>
    </source>
</evidence>
<evidence type="ECO:0000303" key="7">
    <source>
    </source>
</evidence>
<evidence type="ECO:0000305" key="8"/>
<evidence type="ECO:0000305" key="9">
    <source>
    </source>
</evidence>
<evidence type="ECO:0000312" key="10">
    <source>
        <dbReference type="Araport" id="AT1G33960"/>
    </source>
</evidence>
<evidence type="ECO:0000312" key="11">
    <source>
        <dbReference type="EMBL" id="AAG52213.1"/>
    </source>
</evidence>
<feature type="chain" id="PRO_0000190995" description="Immune-associated nucleotide-binding protein 8">
    <location>
        <begin position="1"/>
        <end position="353"/>
    </location>
</feature>
<feature type="domain" description="AIG1-type G" evidence="3">
    <location>
        <begin position="40"/>
        <end position="248"/>
    </location>
</feature>
<feature type="region of interest" description="Disordered" evidence="4">
    <location>
        <begin position="1"/>
        <end position="43"/>
    </location>
</feature>
<feature type="region of interest" description="G1" evidence="3">
    <location>
        <begin position="49"/>
        <end position="56"/>
    </location>
</feature>
<feature type="region of interest" description="G2" evidence="3">
    <location>
        <begin position="76"/>
        <end position="80"/>
    </location>
</feature>
<feature type="region of interest" description="G3" evidence="3">
    <location>
        <begin position="98"/>
        <end position="101"/>
    </location>
</feature>
<feature type="region of interest" description="G4" evidence="3">
    <location>
        <begin position="168"/>
        <end position="171"/>
    </location>
</feature>
<feature type="region of interest" description="G5" evidence="3">
    <location>
        <begin position="207"/>
        <end position="209"/>
    </location>
</feature>
<feature type="coiled-coil region" evidence="2">
    <location>
        <begin position="244"/>
        <end position="291"/>
    </location>
</feature>
<feature type="compositionally biased region" description="Polar residues" evidence="4">
    <location>
        <begin position="1"/>
        <end position="10"/>
    </location>
</feature>
<feature type="compositionally biased region" description="Basic and acidic residues" evidence="4">
    <location>
        <begin position="12"/>
        <end position="34"/>
    </location>
</feature>
<feature type="binding site" evidence="1">
    <location>
        <begin position="49"/>
        <end position="57"/>
    </location>
    <ligand>
        <name>GTP</name>
        <dbReference type="ChEBI" id="CHEBI:37565"/>
    </ligand>
</feature>
<feature type="binding site" evidence="1">
    <location>
        <position position="70"/>
    </location>
    <ligand>
        <name>GTP</name>
        <dbReference type="ChEBI" id="CHEBI:37565"/>
    </ligand>
</feature>
<feature type="binding site" evidence="1">
    <location>
        <position position="208"/>
    </location>
    <ligand>
        <name>GTP</name>
        <dbReference type="ChEBI" id="CHEBI:37565"/>
    </ligand>
</feature>
<organism>
    <name type="scientific">Arabidopsis thaliana</name>
    <name type="common">Mouse-ear cress</name>
    <dbReference type="NCBI Taxonomy" id="3702"/>
    <lineage>
        <taxon>Eukaryota</taxon>
        <taxon>Viridiplantae</taxon>
        <taxon>Streptophyta</taxon>
        <taxon>Embryophyta</taxon>
        <taxon>Tracheophyta</taxon>
        <taxon>Spermatophyta</taxon>
        <taxon>Magnoliopsida</taxon>
        <taxon>eudicotyledons</taxon>
        <taxon>Gunneridae</taxon>
        <taxon>Pentapetalae</taxon>
        <taxon>rosids</taxon>
        <taxon>malvids</taxon>
        <taxon>Brassicales</taxon>
        <taxon>Brassicaceae</taxon>
        <taxon>Camelineae</taxon>
        <taxon>Arabidopsis</taxon>
    </lineage>
</organism>
<dbReference type="EMBL" id="U40856">
    <property type="protein sequence ID" value="AAC49282.1"/>
    <property type="molecule type" value="mRNA"/>
</dbReference>
<dbReference type="EMBL" id="AC022288">
    <property type="protein sequence ID" value="AAG52213.1"/>
    <property type="molecule type" value="Genomic_DNA"/>
</dbReference>
<dbReference type="EMBL" id="CP002684">
    <property type="protein sequence ID" value="AEE31647.1"/>
    <property type="molecule type" value="Genomic_DNA"/>
</dbReference>
<dbReference type="RefSeq" id="NP_174658.1">
    <property type="nucleotide sequence ID" value="NM_103118.4"/>
</dbReference>
<dbReference type="SMR" id="P54120"/>
<dbReference type="FunCoup" id="P54120">
    <property type="interactions" value="50"/>
</dbReference>
<dbReference type="STRING" id="3702.P54120"/>
<dbReference type="PaxDb" id="3702-AT1G33960.1"/>
<dbReference type="ProteomicsDB" id="232170"/>
<dbReference type="EnsemblPlants" id="AT1G33960.1">
    <property type="protein sequence ID" value="AT1G33960.1"/>
    <property type="gene ID" value="AT1G33960"/>
</dbReference>
<dbReference type="GeneID" id="840293"/>
<dbReference type="Gramene" id="AT1G33960.1">
    <property type="protein sequence ID" value="AT1G33960.1"/>
    <property type="gene ID" value="AT1G33960"/>
</dbReference>
<dbReference type="KEGG" id="ath:AT1G33960"/>
<dbReference type="Araport" id="AT1G33960"/>
<dbReference type="TAIR" id="AT1G33960">
    <property type="gene designation" value="AIG1"/>
</dbReference>
<dbReference type="eggNOG" id="ENOG502R7PE">
    <property type="taxonomic scope" value="Eukaryota"/>
</dbReference>
<dbReference type="HOGENOM" id="CLU_010468_0_1_1"/>
<dbReference type="InParanoid" id="P54120"/>
<dbReference type="PhylomeDB" id="P54120"/>
<dbReference type="PRO" id="PR:P54120"/>
<dbReference type="Proteomes" id="UP000006548">
    <property type="component" value="Chromosome 1"/>
</dbReference>
<dbReference type="ExpressionAtlas" id="P54120">
    <property type="expression patterns" value="baseline and differential"/>
</dbReference>
<dbReference type="GO" id="GO:0005525">
    <property type="term" value="F:GTP binding"/>
    <property type="evidence" value="ECO:0007669"/>
    <property type="project" value="UniProtKB-KW"/>
</dbReference>
<dbReference type="GO" id="GO:0009617">
    <property type="term" value="P:response to bacterium"/>
    <property type="evidence" value="ECO:0000270"/>
    <property type="project" value="TAIR"/>
</dbReference>
<dbReference type="CDD" id="cd01852">
    <property type="entry name" value="AIG1"/>
    <property type="match status" value="1"/>
</dbReference>
<dbReference type="FunFam" id="3.40.50.300:FF:000840">
    <property type="entry name" value="Immune-associated nucleotide-binding protein 9"/>
    <property type="match status" value="1"/>
</dbReference>
<dbReference type="Gene3D" id="3.40.50.300">
    <property type="entry name" value="P-loop containing nucleotide triphosphate hydrolases"/>
    <property type="match status" value="1"/>
</dbReference>
<dbReference type="InterPro" id="IPR006703">
    <property type="entry name" value="G_AIG1"/>
</dbReference>
<dbReference type="InterPro" id="IPR045058">
    <property type="entry name" value="GIMA/IAN/Toc"/>
</dbReference>
<dbReference type="InterPro" id="IPR027417">
    <property type="entry name" value="P-loop_NTPase"/>
</dbReference>
<dbReference type="PANTHER" id="PTHR10903:SF146">
    <property type="entry name" value="AIG1-LIKE PROTEIN_ 48352-49494-RELATED"/>
    <property type="match status" value="1"/>
</dbReference>
<dbReference type="PANTHER" id="PTHR10903">
    <property type="entry name" value="GTPASE, IMAP FAMILY MEMBER-RELATED"/>
    <property type="match status" value="1"/>
</dbReference>
<dbReference type="Pfam" id="PF04548">
    <property type="entry name" value="AIG1"/>
    <property type="match status" value="1"/>
</dbReference>
<dbReference type="SUPFAM" id="SSF52540">
    <property type="entry name" value="P-loop containing nucleoside triphosphate hydrolases"/>
    <property type="match status" value="1"/>
</dbReference>
<dbReference type="PROSITE" id="PS51720">
    <property type="entry name" value="G_AIG1"/>
    <property type="match status" value="1"/>
</dbReference>
<keyword id="KW-0175">Coiled coil</keyword>
<keyword id="KW-0342">GTP-binding</keyword>
<keyword id="KW-0547">Nucleotide-binding</keyword>
<keyword id="KW-1185">Reference proteome</keyword>
<accession>P54120</accession>
<protein>
    <recommendedName>
        <fullName evidence="6">Immune-associated nucleotide-binding protein 8</fullName>
        <shortName evidence="6">AtIAN8</shortName>
    </recommendedName>
    <alternativeName>
        <fullName evidence="7">Protein AIG1</fullName>
    </alternativeName>
</protein>
<name>IAN8_ARATH</name>
<gene>
    <name evidence="6" type="primary">IAN8</name>
    <name evidence="7" type="synonym">AIG1</name>
    <name evidence="10" type="ordered locus">At1g33960</name>
    <name evidence="11" type="ORF">T3M13.2</name>
</gene>
<proteinExistence type="evidence at transcript level"/>